<keyword id="KW-1003">Cell membrane</keyword>
<keyword id="KW-0472">Membrane</keyword>
<keyword id="KW-0677">Repeat</keyword>
<keyword id="KW-0812">Transmembrane</keyword>
<keyword id="KW-1133">Transmembrane helix</keyword>
<keyword id="KW-0813">Transport</keyword>
<name>Y2657_BORBR</name>
<comment type="subcellular location">
    <subcellularLocation>
        <location evidence="3">Cell membrane</location>
        <topology evidence="3">Multi-pass membrane protein</topology>
    </subcellularLocation>
</comment>
<comment type="similarity">
    <text evidence="3">Belongs to the AAE transporter (TC 2.A.81) family.</text>
</comment>
<evidence type="ECO:0000255" key="1"/>
<evidence type="ECO:0000255" key="2">
    <source>
        <dbReference type="PROSITE-ProRule" id="PRU00544"/>
    </source>
</evidence>
<evidence type="ECO:0000305" key="3"/>
<organism>
    <name type="scientific">Bordetella bronchiseptica (strain ATCC BAA-588 / NCTC 13252 / RB50)</name>
    <name type="common">Alcaligenes bronchisepticus</name>
    <dbReference type="NCBI Taxonomy" id="257310"/>
    <lineage>
        <taxon>Bacteria</taxon>
        <taxon>Pseudomonadati</taxon>
        <taxon>Pseudomonadota</taxon>
        <taxon>Betaproteobacteria</taxon>
        <taxon>Burkholderiales</taxon>
        <taxon>Alcaligenaceae</taxon>
        <taxon>Bordetella</taxon>
    </lineage>
</organism>
<dbReference type="EMBL" id="BX640445">
    <property type="protein sequence ID" value="CAE33150.1"/>
    <property type="molecule type" value="Genomic_DNA"/>
</dbReference>
<dbReference type="RefSeq" id="WP_003811697.1">
    <property type="nucleotide sequence ID" value="NC_002927.3"/>
</dbReference>
<dbReference type="SMR" id="Q7WJ43"/>
<dbReference type="KEGG" id="bbr:BB2657"/>
<dbReference type="eggNOG" id="COG2985">
    <property type="taxonomic scope" value="Bacteria"/>
</dbReference>
<dbReference type="HOGENOM" id="CLU_035023_2_2_4"/>
<dbReference type="Proteomes" id="UP000001027">
    <property type="component" value="Chromosome"/>
</dbReference>
<dbReference type="GO" id="GO:0005886">
    <property type="term" value="C:plasma membrane"/>
    <property type="evidence" value="ECO:0007669"/>
    <property type="project" value="UniProtKB-SubCell"/>
</dbReference>
<dbReference type="GO" id="GO:0008324">
    <property type="term" value="F:monoatomic cation transmembrane transporter activity"/>
    <property type="evidence" value="ECO:0007669"/>
    <property type="project" value="InterPro"/>
</dbReference>
<dbReference type="GO" id="GO:0006813">
    <property type="term" value="P:potassium ion transport"/>
    <property type="evidence" value="ECO:0007669"/>
    <property type="project" value="InterPro"/>
</dbReference>
<dbReference type="Gene3D" id="3.30.70.1450">
    <property type="entry name" value="Regulator of K+ conductance, C-terminal domain"/>
    <property type="match status" value="1"/>
</dbReference>
<dbReference type="InterPro" id="IPR050144">
    <property type="entry name" value="AAE_transporter"/>
</dbReference>
<dbReference type="InterPro" id="IPR006037">
    <property type="entry name" value="RCK_C"/>
</dbReference>
<dbReference type="InterPro" id="IPR036721">
    <property type="entry name" value="RCK_C_sf"/>
</dbReference>
<dbReference type="InterPro" id="IPR006512">
    <property type="entry name" value="YidE_YbjL"/>
</dbReference>
<dbReference type="NCBIfam" id="TIGR01625">
    <property type="entry name" value="YidE_YbjL_dupl"/>
    <property type="match status" value="1"/>
</dbReference>
<dbReference type="PANTHER" id="PTHR30445:SF9">
    <property type="match status" value="1"/>
</dbReference>
<dbReference type="PANTHER" id="PTHR30445">
    <property type="entry name" value="K(+)_H(+) ANTIPORTER SUBUNIT KHTT"/>
    <property type="match status" value="1"/>
</dbReference>
<dbReference type="Pfam" id="PF06826">
    <property type="entry name" value="Asp-Al_Ex"/>
    <property type="match status" value="2"/>
</dbReference>
<dbReference type="Pfam" id="PF02080">
    <property type="entry name" value="TrkA_C"/>
    <property type="match status" value="1"/>
</dbReference>
<dbReference type="SUPFAM" id="SSF116726">
    <property type="entry name" value="TrkA C-terminal domain-like"/>
    <property type="match status" value="1"/>
</dbReference>
<dbReference type="PROSITE" id="PS51202">
    <property type="entry name" value="RCK_C"/>
    <property type="match status" value="2"/>
</dbReference>
<gene>
    <name type="ordered locus">BB2657</name>
</gene>
<sequence length="565" mass="59266">MQAFVQFLGSNPYILLFLTIGLAVWVGKFSIKGYGLGAVAAAIVVGCLVATVGAAYGVKFHLDEFAKSLLYYLFMYGVGLRVGPSFVNALNKESINYAILAIIAPILGLAIVVLGTQFFGLPLGAAGGMLAGSQTMSAAIGSAEQAVSAGVLSLGSESPEQISAMIALSYGITYIWGTVGIILLCKYLPRIWGVDAKAAALEFEKAHGVPNVDDAGLTAFHPFDLRAYRVENPESIGKTVQQFRTRFPQYQVVNVERGDQLLGPSAETVLQQGDVVALGGRLEEMTANMGVLGPEVPDARALNIPLDQAEILVTNKEVTGRPLKTFRGSELAGQIQLQRVERSGVPLPIGLETTLQKRDVLFVTGLQPAVSKAGEIFGVIARHSSATDLLTLSFGMILGFLIGLIEVPAFGAKVGLGNAGGLLLSGIIVSSISSRLRFFGNTPNAARNILEDLGLIGFVAIVGINAGADLLTQLTGAIALKIFIVGFLASTIPPIIVWAIGFHIMKINPALLMGATAGARSHSGPAREAAKEVGSSVPWLGFPVGYAVSGVLLTVFGYFAMVLAH</sequence>
<reference key="1">
    <citation type="journal article" date="2003" name="Nat. Genet.">
        <title>Comparative analysis of the genome sequences of Bordetella pertussis, Bordetella parapertussis and Bordetella bronchiseptica.</title>
        <authorList>
            <person name="Parkhill J."/>
            <person name="Sebaihia M."/>
            <person name="Preston A."/>
            <person name="Murphy L.D."/>
            <person name="Thomson N.R."/>
            <person name="Harris D.E."/>
            <person name="Holden M.T.G."/>
            <person name="Churcher C.M."/>
            <person name="Bentley S.D."/>
            <person name="Mungall K.L."/>
            <person name="Cerdeno-Tarraga A.-M."/>
            <person name="Temple L."/>
            <person name="James K.D."/>
            <person name="Harris B."/>
            <person name="Quail M.A."/>
            <person name="Achtman M."/>
            <person name="Atkin R."/>
            <person name="Baker S."/>
            <person name="Basham D."/>
            <person name="Bason N."/>
            <person name="Cherevach I."/>
            <person name="Chillingworth T."/>
            <person name="Collins M."/>
            <person name="Cronin A."/>
            <person name="Davis P."/>
            <person name="Doggett J."/>
            <person name="Feltwell T."/>
            <person name="Goble A."/>
            <person name="Hamlin N."/>
            <person name="Hauser H."/>
            <person name="Holroyd S."/>
            <person name="Jagels K."/>
            <person name="Leather S."/>
            <person name="Moule S."/>
            <person name="Norberczak H."/>
            <person name="O'Neil S."/>
            <person name="Ormond D."/>
            <person name="Price C."/>
            <person name="Rabbinowitsch E."/>
            <person name="Rutter S."/>
            <person name="Sanders M."/>
            <person name="Saunders D."/>
            <person name="Seeger K."/>
            <person name="Sharp S."/>
            <person name="Simmonds M."/>
            <person name="Skelton J."/>
            <person name="Squares R."/>
            <person name="Squares S."/>
            <person name="Stevens K."/>
            <person name="Unwin L."/>
            <person name="Whitehead S."/>
            <person name="Barrell B.G."/>
            <person name="Maskell D.J."/>
        </authorList>
    </citation>
    <scope>NUCLEOTIDE SEQUENCE [LARGE SCALE GENOMIC DNA]</scope>
    <source>
        <strain>ATCC BAA-588 / NCTC 13252 / RB50</strain>
    </source>
</reference>
<proteinExistence type="inferred from homology"/>
<feature type="chain" id="PRO_0000208759" description="Uncharacterized transporter BB2657">
    <location>
        <begin position="1"/>
        <end position="565"/>
    </location>
</feature>
<feature type="transmembrane region" description="Helical" evidence="1">
    <location>
        <begin position="4"/>
        <end position="26"/>
    </location>
</feature>
<feature type="transmembrane region" description="Helical" evidence="1">
    <location>
        <begin position="33"/>
        <end position="55"/>
    </location>
</feature>
<feature type="transmembrane region" description="Helical" evidence="1">
    <location>
        <begin position="68"/>
        <end position="90"/>
    </location>
</feature>
<feature type="transmembrane region" description="Helical" evidence="1">
    <location>
        <begin position="97"/>
        <end position="119"/>
    </location>
</feature>
<feature type="transmembrane region" description="Helical" evidence="1">
    <location>
        <begin position="162"/>
        <end position="184"/>
    </location>
</feature>
<feature type="transmembrane region" description="Helical" evidence="1">
    <location>
        <begin position="389"/>
        <end position="411"/>
    </location>
</feature>
<feature type="transmembrane region" description="Helical" evidence="1">
    <location>
        <begin position="415"/>
        <end position="432"/>
    </location>
</feature>
<feature type="transmembrane region" description="Helical" evidence="1">
    <location>
        <begin position="453"/>
        <end position="472"/>
    </location>
</feature>
<feature type="transmembrane region" description="Helical" evidence="1">
    <location>
        <begin position="482"/>
        <end position="504"/>
    </location>
</feature>
<feature type="transmembrane region" description="Helical" evidence="1">
    <location>
        <begin position="539"/>
        <end position="561"/>
    </location>
</feature>
<feature type="domain" description="RCK C-terminal 1" evidence="2">
    <location>
        <begin position="210"/>
        <end position="295"/>
    </location>
</feature>
<feature type="domain" description="RCK C-terminal 2" evidence="2">
    <location>
        <begin position="296"/>
        <end position="379"/>
    </location>
</feature>
<accession>Q7WJ43</accession>
<protein>
    <recommendedName>
        <fullName>Uncharacterized transporter BB2657</fullName>
    </recommendedName>
</protein>